<name>GATY_ECOL5</name>
<evidence type="ECO:0000255" key="1">
    <source>
        <dbReference type="HAMAP-Rule" id="MF_01294"/>
    </source>
</evidence>
<comment type="function">
    <text evidence="1">Catalytic subunit of the tagatose-1,6-bisphosphate aldolase GatYZ, which catalyzes the reversible aldol condensation of dihydroxyacetone phosphate (DHAP or glycerone-phosphate) with glyceraldehyde 3-phosphate (G3P) to produce tagatose 1,6-bisphosphate (TBP). Requires GatZ subunit for full activity and stability. Is involved in the catabolism of galactitol.</text>
</comment>
<comment type="catalytic activity">
    <reaction evidence="1">
        <text>D-tagatofuranose 1,6-bisphosphate = D-glyceraldehyde 3-phosphate + dihydroxyacetone phosphate</text>
        <dbReference type="Rhea" id="RHEA:22948"/>
        <dbReference type="ChEBI" id="CHEBI:57642"/>
        <dbReference type="ChEBI" id="CHEBI:58694"/>
        <dbReference type="ChEBI" id="CHEBI:59776"/>
        <dbReference type="EC" id="4.1.2.40"/>
    </reaction>
</comment>
<comment type="cofactor">
    <cofactor evidence="1">
        <name>Zn(2+)</name>
        <dbReference type="ChEBI" id="CHEBI:29105"/>
    </cofactor>
    <text evidence="1">Binds 1 zinc ion per subunit.</text>
</comment>
<comment type="pathway">
    <text evidence="1">Carbohydrate metabolism; D-tagatose 6-phosphate degradation; D-glyceraldehyde 3-phosphate and glycerone phosphate from D-tagatose 6-phosphate: step 2/2.</text>
</comment>
<comment type="subunit">
    <text evidence="1">Forms a complex with GatZ.</text>
</comment>
<comment type="similarity">
    <text evidence="1">Belongs to the class II fructose-bisphosphate aldolase family. TagBP aldolase GatY subfamily.</text>
</comment>
<keyword id="KW-0298">Galactitol metabolism</keyword>
<keyword id="KW-0456">Lyase</keyword>
<keyword id="KW-0479">Metal-binding</keyword>
<keyword id="KW-0862">Zinc</keyword>
<proteinExistence type="inferred from homology"/>
<feature type="chain" id="PRO_0000355337" description="D-tagatose-1,6-bisphosphate aldolase subunit GatY">
    <location>
        <begin position="1"/>
        <end position="284"/>
    </location>
</feature>
<feature type="active site" description="Proton donor" evidence="1">
    <location>
        <position position="82"/>
    </location>
</feature>
<feature type="binding site" evidence="1">
    <location>
        <position position="83"/>
    </location>
    <ligand>
        <name>Zn(2+)</name>
        <dbReference type="ChEBI" id="CHEBI:29105"/>
        <note>catalytic</note>
    </ligand>
</feature>
<feature type="binding site" evidence="1">
    <location>
        <position position="180"/>
    </location>
    <ligand>
        <name>Zn(2+)</name>
        <dbReference type="ChEBI" id="CHEBI:29105"/>
        <note>catalytic</note>
    </ligand>
</feature>
<feature type="binding site" evidence="1">
    <location>
        <position position="181"/>
    </location>
    <ligand>
        <name>dihydroxyacetone phosphate</name>
        <dbReference type="ChEBI" id="CHEBI:57642"/>
    </ligand>
</feature>
<feature type="binding site" evidence="1">
    <location>
        <position position="208"/>
    </location>
    <ligand>
        <name>Zn(2+)</name>
        <dbReference type="ChEBI" id="CHEBI:29105"/>
        <note>catalytic</note>
    </ligand>
</feature>
<feature type="binding site" evidence="1">
    <location>
        <begin position="209"/>
        <end position="211"/>
    </location>
    <ligand>
        <name>dihydroxyacetone phosphate</name>
        <dbReference type="ChEBI" id="CHEBI:57642"/>
    </ligand>
</feature>
<feature type="binding site" evidence="1">
    <location>
        <begin position="230"/>
        <end position="233"/>
    </location>
    <ligand>
        <name>dihydroxyacetone phosphate</name>
        <dbReference type="ChEBI" id="CHEBI:57642"/>
    </ligand>
</feature>
<sequence length="284" mass="30980">MYVVSTKQMLNNAQRGGYAVPAFNIHNLETMQVVVETAASMHAPVIIAGTPGTFTHVGTENLMALVSAMAKQYHHPLAIHLDHHTKFDDIAQKVRSGVRSVMIDASHLPFAQNISRVKEVVDFCHRFDVSVEAELGQLGGQEDDVQVNEADAFYTNPVQAREFAEATGIDSLAVAIGTAHGMYARAPALDFSRLENIRQWVNLPLVLHGASGLSTKDIQQTIKLGICKINVATELKNAFSQALKNYLTEHPEATDPRDYLQSAKSAMRDVVSKVIADCGCEGRA</sequence>
<protein>
    <recommendedName>
        <fullName evidence="1">D-tagatose-1,6-bisphosphate aldolase subunit GatY</fullName>
        <shortName evidence="1">TBPA</shortName>
        <shortName evidence="1">TagBP aldolase</shortName>
        <ecNumber evidence="1">4.1.2.40</ecNumber>
    </recommendedName>
    <alternativeName>
        <fullName evidence="1">D-tagatose-bisphosphate aldolase class II</fullName>
    </alternativeName>
    <alternativeName>
        <fullName evidence="1">Tagatose-bisphosphate aldolase</fullName>
    </alternativeName>
</protein>
<organism>
    <name type="scientific">Escherichia coli O6:K15:H31 (strain 536 / UPEC)</name>
    <dbReference type="NCBI Taxonomy" id="362663"/>
    <lineage>
        <taxon>Bacteria</taxon>
        <taxon>Pseudomonadati</taxon>
        <taxon>Pseudomonadota</taxon>
        <taxon>Gammaproteobacteria</taxon>
        <taxon>Enterobacterales</taxon>
        <taxon>Enterobacteriaceae</taxon>
        <taxon>Escherichia</taxon>
    </lineage>
</organism>
<dbReference type="EC" id="4.1.2.40" evidence="1"/>
<dbReference type="EMBL" id="CP000247">
    <property type="protein sequence ID" value="ABG70133.1"/>
    <property type="molecule type" value="Genomic_DNA"/>
</dbReference>
<dbReference type="RefSeq" id="WP_000289808.1">
    <property type="nucleotide sequence ID" value="NC_008253.1"/>
</dbReference>
<dbReference type="SMR" id="Q0TFZ6"/>
<dbReference type="KEGG" id="ecp:ECP_2134"/>
<dbReference type="HOGENOM" id="CLU_040088_0_1_6"/>
<dbReference type="UniPathway" id="UPA00704">
    <property type="reaction ID" value="UER00716"/>
</dbReference>
<dbReference type="Proteomes" id="UP000009182">
    <property type="component" value="Chromosome"/>
</dbReference>
<dbReference type="GO" id="GO:0005829">
    <property type="term" value="C:cytosol"/>
    <property type="evidence" value="ECO:0007669"/>
    <property type="project" value="TreeGrafter"/>
</dbReference>
<dbReference type="GO" id="GO:0009025">
    <property type="term" value="F:tagatose-bisphosphate aldolase activity"/>
    <property type="evidence" value="ECO:0007669"/>
    <property type="project" value="UniProtKB-UniRule"/>
</dbReference>
<dbReference type="GO" id="GO:0008270">
    <property type="term" value="F:zinc ion binding"/>
    <property type="evidence" value="ECO:0007669"/>
    <property type="project" value="UniProtKB-UniRule"/>
</dbReference>
<dbReference type="GO" id="GO:2001059">
    <property type="term" value="P:D-tagatose 6-phosphate catabolic process"/>
    <property type="evidence" value="ECO:0007669"/>
    <property type="project" value="UniProtKB-UniRule"/>
</dbReference>
<dbReference type="GO" id="GO:0019404">
    <property type="term" value="P:galactitol catabolic process"/>
    <property type="evidence" value="ECO:0007669"/>
    <property type="project" value="InterPro"/>
</dbReference>
<dbReference type="CDD" id="cd00947">
    <property type="entry name" value="TBP_aldolase_IIB"/>
    <property type="match status" value="1"/>
</dbReference>
<dbReference type="FunFam" id="3.20.20.70:FF:000043">
    <property type="entry name" value="D-tagatose-1,6-bisphosphate aldolase subunit GatY"/>
    <property type="match status" value="1"/>
</dbReference>
<dbReference type="Gene3D" id="3.20.20.70">
    <property type="entry name" value="Aldolase class I"/>
    <property type="match status" value="1"/>
</dbReference>
<dbReference type="HAMAP" id="MF_01294">
    <property type="entry name" value="TagBP_aldolase_GatY"/>
    <property type="match status" value="1"/>
</dbReference>
<dbReference type="InterPro" id="IPR013785">
    <property type="entry name" value="Aldolase_TIM"/>
</dbReference>
<dbReference type="InterPro" id="IPR050246">
    <property type="entry name" value="Class_II_FBP_aldolase"/>
</dbReference>
<dbReference type="InterPro" id="IPR000771">
    <property type="entry name" value="FBA_II"/>
</dbReference>
<dbReference type="InterPro" id="IPR011288">
    <property type="entry name" value="TagBP_ald_KbaY/GatY"/>
</dbReference>
<dbReference type="InterPro" id="IPR023955">
    <property type="entry name" value="TagBP_aldolase_GatY"/>
</dbReference>
<dbReference type="NCBIfam" id="TIGR00167">
    <property type="entry name" value="cbbA"/>
    <property type="match status" value="1"/>
</dbReference>
<dbReference type="NCBIfam" id="NF006626">
    <property type="entry name" value="PRK09195.1"/>
    <property type="match status" value="1"/>
</dbReference>
<dbReference type="NCBIfam" id="NF009374">
    <property type="entry name" value="PRK12737.1"/>
    <property type="match status" value="1"/>
</dbReference>
<dbReference type="NCBIfam" id="TIGR01858">
    <property type="entry name" value="tag_bisphos_ald"/>
    <property type="match status" value="1"/>
</dbReference>
<dbReference type="PANTHER" id="PTHR30304">
    <property type="entry name" value="D-TAGATOSE-1,6-BISPHOSPHATE ALDOLASE"/>
    <property type="match status" value="1"/>
</dbReference>
<dbReference type="PANTHER" id="PTHR30304:SF0">
    <property type="entry name" value="D-TAGATOSE-1,6-BISPHOSPHATE ALDOLASE SUBUNIT GATY-RELATED"/>
    <property type="match status" value="1"/>
</dbReference>
<dbReference type="Pfam" id="PF01116">
    <property type="entry name" value="F_bP_aldolase"/>
    <property type="match status" value="1"/>
</dbReference>
<dbReference type="PIRSF" id="PIRSF001359">
    <property type="entry name" value="F_bP_aldolase_II"/>
    <property type="match status" value="1"/>
</dbReference>
<dbReference type="SUPFAM" id="SSF51569">
    <property type="entry name" value="Aldolase"/>
    <property type="match status" value="1"/>
</dbReference>
<dbReference type="PROSITE" id="PS00602">
    <property type="entry name" value="ALDOLASE_CLASS_II_1"/>
    <property type="match status" value="1"/>
</dbReference>
<dbReference type="PROSITE" id="PS00806">
    <property type="entry name" value="ALDOLASE_CLASS_II_2"/>
    <property type="match status" value="1"/>
</dbReference>
<gene>
    <name evidence="1" type="primary">gatY</name>
    <name type="ordered locus">ECP_2134</name>
</gene>
<reference key="1">
    <citation type="journal article" date="2006" name="Mol. Microbiol.">
        <title>Role of pathogenicity island-associated integrases in the genome plasticity of uropathogenic Escherichia coli strain 536.</title>
        <authorList>
            <person name="Hochhut B."/>
            <person name="Wilde C."/>
            <person name="Balling G."/>
            <person name="Middendorf B."/>
            <person name="Dobrindt U."/>
            <person name="Brzuszkiewicz E."/>
            <person name="Gottschalk G."/>
            <person name="Carniel E."/>
            <person name="Hacker J."/>
        </authorList>
    </citation>
    <scope>NUCLEOTIDE SEQUENCE [LARGE SCALE GENOMIC DNA]</scope>
    <source>
        <strain>536 / UPEC</strain>
    </source>
</reference>
<accession>Q0TFZ6</accession>